<organism>
    <name type="scientific">Psychrobacter sp. (strain PRwf-1)</name>
    <dbReference type="NCBI Taxonomy" id="349106"/>
    <lineage>
        <taxon>Bacteria</taxon>
        <taxon>Pseudomonadati</taxon>
        <taxon>Pseudomonadota</taxon>
        <taxon>Gammaproteobacteria</taxon>
        <taxon>Moraxellales</taxon>
        <taxon>Moraxellaceae</taxon>
        <taxon>Psychrobacter</taxon>
    </lineage>
</organism>
<sequence length="225" mass="25371">MMNTAEFKVIFNQYDELDTLLLEAITQLKIDISAEQRRKLLLYLDKLLFWNKAYNLTAIKQPKEALIKHVIDCLAILPHLKPGKLLDIGTGAGLPGVIVAICEPERPITVLDSNQKKIRFIRQSISELQVTNVTPVASRIENFNPDEGDKFAVVTSRAFASLTDFVEAAAPRLAQGGWLQAMKGLIPEPQELQVLQDQWQIDNIALSVPYLHETRHLTELHKIVI</sequence>
<gene>
    <name evidence="1" type="primary">rsmG</name>
    <name type="ordered locus">PsycPRwf_1398</name>
</gene>
<comment type="function">
    <text evidence="1">Specifically methylates the N7 position of guanine in position 527 of 16S rRNA.</text>
</comment>
<comment type="catalytic activity">
    <reaction evidence="1">
        <text>guanosine(527) in 16S rRNA + S-adenosyl-L-methionine = N(7)-methylguanosine(527) in 16S rRNA + S-adenosyl-L-homocysteine</text>
        <dbReference type="Rhea" id="RHEA:42732"/>
        <dbReference type="Rhea" id="RHEA-COMP:10209"/>
        <dbReference type="Rhea" id="RHEA-COMP:10210"/>
        <dbReference type="ChEBI" id="CHEBI:57856"/>
        <dbReference type="ChEBI" id="CHEBI:59789"/>
        <dbReference type="ChEBI" id="CHEBI:74269"/>
        <dbReference type="ChEBI" id="CHEBI:74480"/>
        <dbReference type="EC" id="2.1.1.170"/>
    </reaction>
</comment>
<comment type="subcellular location">
    <subcellularLocation>
        <location evidence="1">Cytoplasm</location>
    </subcellularLocation>
</comment>
<comment type="similarity">
    <text evidence="1">Belongs to the methyltransferase superfamily. RNA methyltransferase RsmG family.</text>
</comment>
<accession>A5WFA2</accession>
<reference key="1">
    <citation type="submission" date="2007-05" db="EMBL/GenBank/DDBJ databases">
        <title>Complete sequence of chromosome of Psychrobacter sp. PRwf-1.</title>
        <authorList>
            <consortium name="US DOE Joint Genome Institute"/>
            <person name="Copeland A."/>
            <person name="Lucas S."/>
            <person name="Lapidus A."/>
            <person name="Barry K."/>
            <person name="Detter J.C."/>
            <person name="Glavina del Rio T."/>
            <person name="Hammon N."/>
            <person name="Israni S."/>
            <person name="Dalin E."/>
            <person name="Tice H."/>
            <person name="Pitluck S."/>
            <person name="Chain P."/>
            <person name="Malfatti S."/>
            <person name="Shin M."/>
            <person name="Vergez L."/>
            <person name="Schmutz J."/>
            <person name="Larimer F."/>
            <person name="Land M."/>
            <person name="Hauser L."/>
            <person name="Kyrpides N."/>
            <person name="Kim E."/>
            <person name="Tiedje J."/>
            <person name="Richardson P."/>
        </authorList>
    </citation>
    <scope>NUCLEOTIDE SEQUENCE [LARGE SCALE GENOMIC DNA]</scope>
    <source>
        <strain>PRwf-1</strain>
    </source>
</reference>
<name>RSMG_PSYWF</name>
<feature type="chain" id="PRO_0000335405" description="Ribosomal RNA small subunit methyltransferase G">
    <location>
        <begin position="1"/>
        <end position="225"/>
    </location>
</feature>
<feature type="binding site" evidence="1">
    <location>
        <position position="89"/>
    </location>
    <ligand>
        <name>S-adenosyl-L-methionine</name>
        <dbReference type="ChEBI" id="CHEBI:59789"/>
    </ligand>
</feature>
<feature type="binding site" evidence="1">
    <location>
        <position position="94"/>
    </location>
    <ligand>
        <name>S-adenosyl-L-methionine</name>
        <dbReference type="ChEBI" id="CHEBI:59789"/>
    </ligand>
</feature>
<feature type="binding site" evidence="1">
    <location>
        <begin position="140"/>
        <end position="141"/>
    </location>
    <ligand>
        <name>S-adenosyl-L-methionine</name>
        <dbReference type="ChEBI" id="CHEBI:59789"/>
    </ligand>
</feature>
<feature type="binding site" evidence="1">
    <location>
        <position position="157"/>
    </location>
    <ligand>
        <name>S-adenosyl-L-methionine</name>
        <dbReference type="ChEBI" id="CHEBI:59789"/>
    </ligand>
</feature>
<dbReference type="EC" id="2.1.1.170" evidence="1"/>
<dbReference type="EMBL" id="CP000713">
    <property type="protein sequence ID" value="ABQ94343.1"/>
    <property type="molecule type" value="Genomic_DNA"/>
</dbReference>
<dbReference type="SMR" id="A5WFA2"/>
<dbReference type="STRING" id="349106.PsycPRwf_1398"/>
<dbReference type="KEGG" id="prw:PsycPRwf_1398"/>
<dbReference type="eggNOG" id="COG0357">
    <property type="taxonomic scope" value="Bacteria"/>
</dbReference>
<dbReference type="HOGENOM" id="CLU_065341_2_0_6"/>
<dbReference type="GO" id="GO:0005829">
    <property type="term" value="C:cytosol"/>
    <property type="evidence" value="ECO:0007669"/>
    <property type="project" value="TreeGrafter"/>
</dbReference>
<dbReference type="GO" id="GO:0070043">
    <property type="term" value="F:rRNA (guanine-N7-)-methyltransferase activity"/>
    <property type="evidence" value="ECO:0007669"/>
    <property type="project" value="UniProtKB-UniRule"/>
</dbReference>
<dbReference type="CDD" id="cd02440">
    <property type="entry name" value="AdoMet_MTases"/>
    <property type="match status" value="1"/>
</dbReference>
<dbReference type="Gene3D" id="3.40.50.150">
    <property type="entry name" value="Vaccinia Virus protein VP39"/>
    <property type="match status" value="1"/>
</dbReference>
<dbReference type="HAMAP" id="MF_00074">
    <property type="entry name" value="16SrRNA_methyltr_G"/>
    <property type="match status" value="1"/>
</dbReference>
<dbReference type="InterPro" id="IPR003682">
    <property type="entry name" value="rRNA_ssu_MeTfrase_G"/>
</dbReference>
<dbReference type="InterPro" id="IPR029063">
    <property type="entry name" value="SAM-dependent_MTases_sf"/>
</dbReference>
<dbReference type="NCBIfam" id="TIGR00138">
    <property type="entry name" value="rsmG_gidB"/>
    <property type="match status" value="1"/>
</dbReference>
<dbReference type="PANTHER" id="PTHR31760">
    <property type="entry name" value="S-ADENOSYL-L-METHIONINE-DEPENDENT METHYLTRANSFERASES SUPERFAMILY PROTEIN"/>
    <property type="match status" value="1"/>
</dbReference>
<dbReference type="PANTHER" id="PTHR31760:SF0">
    <property type="entry name" value="S-ADENOSYL-L-METHIONINE-DEPENDENT METHYLTRANSFERASES SUPERFAMILY PROTEIN"/>
    <property type="match status" value="1"/>
</dbReference>
<dbReference type="Pfam" id="PF02527">
    <property type="entry name" value="GidB"/>
    <property type="match status" value="1"/>
</dbReference>
<dbReference type="PIRSF" id="PIRSF003078">
    <property type="entry name" value="GidB"/>
    <property type="match status" value="1"/>
</dbReference>
<dbReference type="SUPFAM" id="SSF53335">
    <property type="entry name" value="S-adenosyl-L-methionine-dependent methyltransferases"/>
    <property type="match status" value="1"/>
</dbReference>
<protein>
    <recommendedName>
        <fullName evidence="1">Ribosomal RNA small subunit methyltransferase G</fullName>
        <ecNumber evidence="1">2.1.1.170</ecNumber>
    </recommendedName>
    <alternativeName>
        <fullName evidence="1">16S rRNA 7-methylguanosine methyltransferase</fullName>
        <shortName evidence="1">16S rRNA m7G methyltransferase</shortName>
    </alternativeName>
</protein>
<proteinExistence type="inferred from homology"/>
<evidence type="ECO:0000255" key="1">
    <source>
        <dbReference type="HAMAP-Rule" id="MF_00074"/>
    </source>
</evidence>
<keyword id="KW-0963">Cytoplasm</keyword>
<keyword id="KW-0489">Methyltransferase</keyword>
<keyword id="KW-0698">rRNA processing</keyword>
<keyword id="KW-0949">S-adenosyl-L-methionine</keyword>
<keyword id="KW-0808">Transferase</keyword>